<protein>
    <recommendedName>
        <fullName>Protein ElaA</fullName>
    </recommendedName>
</protein>
<comment type="similarity">
    <text evidence="2">Belongs to the UPF0039 (ElaA) family.</text>
</comment>
<feature type="chain" id="PRO_0000201917" description="Protein ElaA">
    <location>
        <begin position="1"/>
        <end position="153"/>
    </location>
</feature>
<feature type="domain" description="N-acetyltransferase" evidence="1">
    <location>
        <begin position="7"/>
        <end position="151"/>
    </location>
</feature>
<feature type="sequence conflict" description="In Ref. 5." evidence="2" ref="5">
    <original>Q</original>
    <variation>R</variation>
    <location>
        <position position="121"/>
    </location>
</feature>
<feature type="strand" evidence="3">
    <location>
        <begin position="3"/>
        <end position="8"/>
    </location>
</feature>
<feature type="helix" evidence="3">
    <location>
        <begin position="9"/>
        <end position="11"/>
    </location>
</feature>
<feature type="helix" evidence="3">
    <location>
        <begin position="14"/>
        <end position="28"/>
    </location>
</feature>
<feature type="turn" evidence="3">
    <location>
        <begin position="29"/>
        <end position="32"/>
    </location>
</feature>
<feature type="strand" evidence="3">
    <location>
        <begin position="43"/>
        <end position="45"/>
    </location>
</feature>
<feature type="strand" evidence="3">
    <location>
        <begin position="49"/>
        <end position="55"/>
    </location>
</feature>
<feature type="strand" evidence="3">
    <location>
        <begin position="58"/>
        <end position="66"/>
    </location>
</feature>
<feature type="strand" evidence="3">
    <location>
        <begin position="69"/>
        <end position="71"/>
    </location>
</feature>
<feature type="strand" evidence="3">
    <location>
        <begin position="75"/>
        <end position="82"/>
    </location>
</feature>
<feature type="helix" evidence="3">
    <location>
        <begin position="84"/>
        <end position="86"/>
    </location>
</feature>
<feature type="helix" evidence="3">
    <location>
        <begin position="91"/>
        <end position="106"/>
    </location>
</feature>
<feature type="strand" evidence="3">
    <location>
        <begin position="112"/>
        <end position="116"/>
    </location>
</feature>
<feature type="helix" evidence="3">
    <location>
        <begin position="121"/>
        <end position="125"/>
    </location>
</feature>
<feature type="turn" evidence="3">
    <location>
        <begin position="126"/>
        <end position="128"/>
    </location>
</feature>
<feature type="strand" evidence="3">
    <location>
        <begin position="142"/>
        <end position="148"/>
    </location>
</feature>
<evidence type="ECO:0000255" key="1">
    <source>
        <dbReference type="PROSITE-ProRule" id="PRU00532"/>
    </source>
</evidence>
<evidence type="ECO:0000305" key="2"/>
<evidence type="ECO:0007829" key="3">
    <source>
        <dbReference type="PDB" id="5Z6N"/>
    </source>
</evidence>
<sequence length="153" mass="17420">MIEWQDLHHSELSVSQLYALLQLRCAVFVVEQNCPYQDIDGDDLTGDNRHILGWKNDELVAYARILKSDDDLEPVVIGRVIVSEALRGEKVGQQLMSKTLETCTHHWPDKPVYLGAQAHLQNFYQSFGFIPVTEVYEEDGIPHIGMAREVIQA</sequence>
<keyword id="KW-0002">3D-structure</keyword>
<keyword id="KW-1185">Reference proteome</keyword>
<accession>P0AEH3</accession>
<accession>P52077</accession>
<accession>Q47011</accession>
<reference key="1">
    <citation type="submission" date="1996-06" db="EMBL/GenBank/DDBJ databases">
        <authorList>
            <person name="Huisman G.W."/>
        </authorList>
    </citation>
    <scope>NUCLEOTIDE SEQUENCE [GENOMIC DNA]</scope>
    <source>
        <strain>K12</strain>
    </source>
</reference>
<reference key="2">
    <citation type="journal article" date="1997" name="DNA Res.">
        <title>Construction of a contiguous 874-kb sequence of the Escherichia coli-K12 genome corresponding to 50.0-68.8 min on the linkage map and analysis of its sequence features.</title>
        <authorList>
            <person name="Yamamoto Y."/>
            <person name="Aiba H."/>
            <person name="Baba T."/>
            <person name="Hayashi K."/>
            <person name="Inada T."/>
            <person name="Isono K."/>
            <person name="Itoh T."/>
            <person name="Kimura S."/>
            <person name="Kitagawa M."/>
            <person name="Makino K."/>
            <person name="Miki T."/>
            <person name="Mitsuhashi N."/>
            <person name="Mizobuchi K."/>
            <person name="Mori H."/>
            <person name="Nakade S."/>
            <person name="Nakamura Y."/>
            <person name="Nashimoto H."/>
            <person name="Oshima T."/>
            <person name="Oyama S."/>
            <person name="Saito N."/>
            <person name="Sampei G."/>
            <person name="Satoh Y."/>
            <person name="Sivasundaram S."/>
            <person name="Tagami H."/>
            <person name="Takahashi H."/>
            <person name="Takeda J."/>
            <person name="Takemoto K."/>
            <person name="Uehara K."/>
            <person name="Wada C."/>
            <person name="Yamagata S."/>
            <person name="Horiuchi T."/>
        </authorList>
    </citation>
    <scope>NUCLEOTIDE SEQUENCE [LARGE SCALE GENOMIC DNA]</scope>
    <source>
        <strain>K12 / W3110 / ATCC 27325 / DSM 5911</strain>
    </source>
</reference>
<reference key="3">
    <citation type="journal article" date="1997" name="Science">
        <title>The complete genome sequence of Escherichia coli K-12.</title>
        <authorList>
            <person name="Blattner F.R."/>
            <person name="Plunkett G. III"/>
            <person name="Bloch C.A."/>
            <person name="Perna N.T."/>
            <person name="Burland V."/>
            <person name="Riley M."/>
            <person name="Collado-Vides J."/>
            <person name="Glasner J.D."/>
            <person name="Rode C.K."/>
            <person name="Mayhew G.F."/>
            <person name="Gregor J."/>
            <person name="Davis N.W."/>
            <person name="Kirkpatrick H.A."/>
            <person name="Goeden M.A."/>
            <person name="Rose D.J."/>
            <person name="Mau B."/>
            <person name="Shao Y."/>
        </authorList>
    </citation>
    <scope>NUCLEOTIDE SEQUENCE [LARGE SCALE GENOMIC DNA]</scope>
    <source>
        <strain>K12 / MG1655 / ATCC 47076</strain>
    </source>
</reference>
<reference key="4">
    <citation type="journal article" date="2006" name="Mol. Syst. Biol.">
        <title>Highly accurate genome sequences of Escherichia coli K-12 strains MG1655 and W3110.</title>
        <authorList>
            <person name="Hayashi K."/>
            <person name="Morooka N."/>
            <person name="Yamamoto Y."/>
            <person name="Fujita K."/>
            <person name="Isono K."/>
            <person name="Choi S."/>
            <person name="Ohtsubo E."/>
            <person name="Baba T."/>
            <person name="Wanner B.L."/>
            <person name="Mori H."/>
            <person name="Horiuchi T."/>
        </authorList>
    </citation>
    <scope>NUCLEOTIDE SEQUENCE [LARGE SCALE GENOMIC DNA]</scope>
    <source>
        <strain>K12 / W3110 / ATCC 27325 / DSM 5911</strain>
    </source>
</reference>
<reference key="5">
    <citation type="journal article" date="1996" name="FEBS Lett.">
        <title>An isochorismate hydroxymutase isogene in Escherichia coli.</title>
        <authorList>
            <person name="Mueller R."/>
            <person name="Dahm C."/>
            <person name="Schulte G."/>
            <person name="Leistner E."/>
        </authorList>
    </citation>
    <scope>NUCLEOTIDE SEQUENCE [GENOMIC DNA] OF 8-153</scope>
    <source>
        <strain>K12 / MC4100 / ATCC 35695 / DSM 6574</strain>
    </source>
</reference>
<reference key="6">
    <citation type="unpublished observations" date="1996-03">
        <authorList>
            <person name="Rudd K.E."/>
        </authorList>
    </citation>
    <scope>IDENTIFICATION</scope>
</reference>
<gene>
    <name type="primary">elaA</name>
    <name type="synonym">yfbC</name>
    <name type="ordered locus">b2267</name>
    <name type="ordered locus">JW2262</name>
</gene>
<proteinExistence type="evidence at protein level"/>
<dbReference type="EMBL" id="U58768">
    <property type="protein sequence ID" value="AAB02731.1"/>
    <property type="molecule type" value="Genomic_DNA"/>
</dbReference>
<dbReference type="EMBL" id="U00096">
    <property type="protein sequence ID" value="AAC75327.1"/>
    <property type="molecule type" value="Genomic_DNA"/>
</dbReference>
<dbReference type="EMBL" id="AP009048">
    <property type="protein sequence ID" value="BAA16094.1"/>
    <property type="molecule type" value="Genomic_DNA"/>
</dbReference>
<dbReference type="EMBL" id="Z50849">
    <property type="status" value="NOT_ANNOTATED_CDS"/>
    <property type="molecule type" value="Genomic_DNA"/>
</dbReference>
<dbReference type="PIR" id="A64998">
    <property type="entry name" value="A64998"/>
</dbReference>
<dbReference type="RefSeq" id="NP_416770.1">
    <property type="nucleotide sequence ID" value="NC_000913.3"/>
</dbReference>
<dbReference type="RefSeq" id="WP_000574091.1">
    <property type="nucleotide sequence ID" value="NZ_STEB01000008.1"/>
</dbReference>
<dbReference type="PDB" id="5Z6N">
    <property type="method" value="X-ray"/>
    <property type="resolution" value="2.60 A"/>
    <property type="chains" value="A/B=1-153"/>
</dbReference>
<dbReference type="PDBsum" id="5Z6N"/>
<dbReference type="SMR" id="P0AEH3"/>
<dbReference type="BioGRID" id="4260507">
    <property type="interactions" value="35"/>
</dbReference>
<dbReference type="FunCoup" id="P0AEH3">
    <property type="interactions" value="99"/>
</dbReference>
<dbReference type="IntAct" id="P0AEH3">
    <property type="interactions" value="5"/>
</dbReference>
<dbReference type="STRING" id="511145.b2267"/>
<dbReference type="jPOST" id="P0AEH3"/>
<dbReference type="PaxDb" id="511145-b2267"/>
<dbReference type="EnsemblBacteria" id="AAC75327">
    <property type="protein sequence ID" value="AAC75327"/>
    <property type="gene ID" value="b2267"/>
</dbReference>
<dbReference type="GeneID" id="946750"/>
<dbReference type="KEGG" id="ecj:JW2262"/>
<dbReference type="KEGG" id="eco:b2267"/>
<dbReference type="KEGG" id="ecoc:C3026_12660"/>
<dbReference type="PATRIC" id="fig|1411691.4.peg.4469"/>
<dbReference type="EchoBASE" id="EB2976"/>
<dbReference type="eggNOG" id="COG2153">
    <property type="taxonomic scope" value="Bacteria"/>
</dbReference>
<dbReference type="HOGENOM" id="CLU_056607_3_1_6"/>
<dbReference type="InParanoid" id="P0AEH3"/>
<dbReference type="OMA" id="DIPHIDM"/>
<dbReference type="OrthoDB" id="9796171at2"/>
<dbReference type="PhylomeDB" id="P0AEH3"/>
<dbReference type="BioCyc" id="EcoCyc:G7174-MONOMER"/>
<dbReference type="PRO" id="PR:P0AEH3"/>
<dbReference type="Proteomes" id="UP000000625">
    <property type="component" value="Chromosome"/>
</dbReference>
<dbReference type="GO" id="GO:0008080">
    <property type="term" value="F:N-acetyltransferase activity"/>
    <property type="evidence" value="ECO:0000318"/>
    <property type="project" value="GO_Central"/>
</dbReference>
<dbReference type="CDD" id="cd04301">
    <property type="entry name" value="NAT_SF"/>
    <property type="match status" value="1"/>
</dbReference>
<dbReference type="FunFam" id="3.40.630.30:FF:000035">
    <property type="entry name" value="GNAT family N-acetyltransferase"/>
    <property type="match status" value="1"/>
</dbReference>
<dbReference type="Gene3D" id="3.40.630.30">
    <property type="match status" value="1"/>
</dbReference>
<dbReference type="InterPro" id="IPR016181">
    <property type="entry name" value="Acyl_CoA_acyltransferase"/>
</dbReference>
<dbReference type="InterPro" id="IPR000182">
    <property type="entry name" value="GNAT_dom"/>
</dbReference>
<dbReference type="NCBIfam" id="NF007644">
    <property type="entry name" value="PRK10314.1"/>
    <property type="match status" value="1"/>
</dbReference>
<dbReference type="Pfam" id="PF13673">
    <property type="entry name" value="Acetyltransf_10"/>
    <property type="match status" value="1"/>
</dbReference>
<dbReference type="SUPFAM" id="SSF55729">
    <property type="entry name" value="Acyl-CoA N-acyltransferases (Nat)"/>
    <property type="match status" value="1"/>
</dbReference>
<dbReference type="PROSITE" id="PS51186">
    <property type="entry name" value="GNAT"/>
    <property type="match status" value="1"/>
</dbReference>
<name>ELAA_ECOLI</name>
<organism>
    <name type="scientific">Escherichia coli (strain K12)</name>
    <dbReference type="NCBI Taxonomy" id="83333"/>
    <lineage>
        <taxon>Bacteria</taxon>
        <taxon>Pseudomonadati</taxon>
        <taxon>Pseudomonadota</taxon>
        <taxon>Gammaproteobacteria</taxon>
        <taxon>Enterobacterales</taxon>
        <taxon>Enterobacteriaceae</taxon>
        <taxon>Escherichia</taxon>
    </lineage>
</organism>